<reference key="1">
    <citation type="journal article" date="2009" name="PLoS Genet.">
        <title>Organised genome dynamics in the Escherichia coli species results in highly diverse adaptive paths.</title>
        <authorList>
            <person name="Touchon M."/>
            <person name="Hoede C."/>
            <person name="Tenaillon O."/>
            <person name="Barbe V."/>
            <person name="Baeriswyl S."/>
            <person name="Bidet P."/>
            <person name="Bingen E."/>
            <person name="Bonacorsi S."/>
            <person name="Bouchier C."/>
            <person name="Bouvet O."/>
            <person name="Calteau A."/>
            <person name="Chiapello H."/>
            <person name="Clermont O."/>
            <person name="Cruveiller S."/>
            <person name="Danchin A."/>
            <person name="Diard M."/>
            <person name="Dossat C."/>
            <person name="Karoui M.E."/>
            <person name="Frapy E."/>
            <person name="Garry L."/>
            <person name="Ghigo J.M."/>
            <person name="Gilles A.M."/>
            <person name="Johnson J."/>
            <person name="Le Bouguenec C."/>
            <person name="Lescat M."/>
            <person name="Mangenot S."/>
            <person name="Martinez-Jehanne V."/>
            <person name="Matic I."/>
            <person name="Nassif X."/>
            <person name="Oztas S."/>
            <person name="Petit M.A."/>
            <person name="Pichon C."/>
            <person name="Rouy Z."/>
            <person name="Ruf C.S."/>
            <person name="Schneider D."/>
            <person name="Tourret J."/>
            <person name="Vacherie B."/>
            <person name="Vallenet D."/>
            <person name="Medigue C."/>
            <person name="Rocha E.P.C."/>
            <person name="Denamur E."/>
        </authorList>
    </citation>
    <scope>NUCLEOTIDE SEQUENCE [LARGE SCALE GENOMIC DNA]</scope>
    <source>
        <strain>ATCC 35469 / DSM 13698 / BCRC 15582 / CCUG 18766 / IAM 14443 / JCM 21226 / LMG 7866 / NBRC 102419 / NCTC 12128 / CDC 0568-73</strain>
    </source>
</reference>
<protein>
    <recommendedName>
        <fullName evidence="1">Uracil-DNA glycosylase</fullName>
        <shortName evidence="1">UDG</shortName>
        <ecNumber evidence="1">3.2.2.27</ecNumber>
    </recommendedName>
</protein>
<name>UNG_ESCF3</name>
<comment type="function">
    <text evidence="1">Excises uracil residues from the DNA which can arise as a result of misincorporation of dUMP residues by DNA polymerase or due to deamination of cytosine.</text>
</comment>
<comment type="catalytic activity">
    <reaction evidence="1">
        <text>Hydrolyzes single-stranded DNA or mismatched double-stranded DNA and polynucleotides, releasing free uracil.</text>
        <dbReference type="EC" id="3.2.2.27"/>
    </reaction>
</comment>
<comment type="subcellular location">
    <subcellularLocation>
        <location evidence="1">Cytoplasm</location>
    </subcellularLocation>
</comment>
<comment type="similarity">
    <text evidence="1">Belongs to the uracil-DNA glycosylase (UDG) superfamily. UNG family.</text>
</comment>
<keyword id="KW-0963">Cytoplasm</keyword>
<keyword id="KW-0227">DNA damage</keyword>
<keyword id="KW-0234">DNA repair</keyword>
<keyword id="KW-0378">Hydrolase</keyword>
<sequence length="229" mass="25663">MANELTWHDVLAEEKQQPYFLNTLQTVASERQSGITVYPPQKDVFNAFRFTELGDVKVVILGQDPYHGPGQAHGLAFSVRPGIAIPPSLLNMYKELENTIPGFTRPGHGYLESWARQGVLLLNTVLTVRAGQAHSHASLGWETFTDKVISLINQHREGVVFLLWGSHAQKKGAIIDKQRHHVLKAPHPSPLSAHRGFFGCNHFVLANQWLEQRGEKPIDWMPVLPAESE</sequence>
<organism>
    <name type="scientific">Escherichia fergusonii (strain ATCC 35469 / DSM 13698 / CCUG 18766 / IAM 14443 / JCM 21226 / LMG 7866 / NBRC 102419 / NCTC 12128 / CDC 0568-73)</name>
    <dbReference type="NCBI Taxonomy" id="585054"/>
    <lineage>
        <taxon>Bacteria</taxon>
        <taxon>Pseudomonadati</taxon>
        <taxon>Pseudomonadota</taxon>
        <taxon>Gammaproteobacteria</taxon>
        <taxon>Enterobacterales</taxon>
        <taxon>Enterobacteriaceae</taxon>
        <taxon>Escherichia</taxon>
    </lineage>
</organism>
<accession>B7LUY5</accession>
<feature type="chain" id="PRO_1000199785" description="Uracil-DNA glycosylase">
    <location>
        <begin position="1"/>
        <end position="229"/>
    </location>
</feature>
<feature type="active site" description="Proton acceptor" evidence="1">
    <location>
        <position position="64"/>
    </location>
</feature>
<evidence type="ECO:0000255" key="1">
    <source>
        <dbReference type="HAMAP-Rule" id="MF_00148"/>
    </source>
</evidence>
<gene>
    <name evidence="1" type="primary">ung</name>
    <name type="ordered locus">EFER_0494</name>
</gene>
<proteinExistence type="inferred from homology"/>
<dbReference type="EC" id="3.2.2.27" evidence="1"/>
<dbReference type="EMBL" id="CU928158">
    <property type="protein sequence ID" value="CAQ88043.1"/>
    <property type="molecule type" value="Genomic_DNA"/>
</dbReference>
<dbReference type="RefSeq" id="WP_001262706.1">
    <property type="nucleotide sequence ID" value="NC_011740.1"/>
</dbReference>
<dbReference type="SMR" id="B7LUY5"/>
<dbReference type="GeneID" id="75058442"/>
<dbReference type="KEGG" id="efe:EFER_0494"/>
<dbReference type="HOGENOM" id="CLU_032162_3_1_6"/>
<dbReference type="OrthoDB" id="9804372at2"/>
<dbReference type="Proteomes" id="UP000000745">
    <property type="component" value="Chromosome"/>
</dbReference>
<dbReference type="GO" id="GO:0005737">
    <property type="term" value="C:cytoplasm"/>
    <property type="evidence" value="ECO:0007669"/>
    <property type="project" value="UniProtKB-SubCell"/>
</dbReference>
<dbReference type="GO" id="GO:0004844">
    <property type="term" value="F:uracil DNA N-glycosylase activity"/>
    <property type="evidence" value="ECO:0007669"/>
    <property type="project" value="UniProtKB-UniRule"/>
</dbReference>
<dbReference type="GO" id="GO:0097510">
    <property type="term" value="P:base-excision repair, AP site formation via deaminated base removal"/>
    <property type="evidence" value="ECO:0007669"/>
    <property type="project" value="TreeGrafter"/>
</dbReference>
<dbReference type="CDD" id="cd10027">
    <property type="entry name" value="UDG-F1-like"/>
    <property type="match status" value="1"/>
</dbReference>
<dbReference type="FunFam" id="3.40.470.10:FF:000001">
    <property type="entry name" value="Uracil-DNA glycosylase"/>
    <property type="match status" value="1"/>
</dbReference>
<dbReference type="Gene3D" id="3.40.470.10">
    <property type="entry name" value="Uracil-DNA glycosylase-like domain"/>
    <property type="match status" value="1"/>
</dbReference>
<dbReference type="HAMAP" id="MF_00148">
    <property type="entry name" value="UDG"/>
    <property type="match status" value="1"/>
</dbReference>
<dbReference type="InterPro" id="IPR002043">
    <property type="entry name" value="UDG_fam1"/>
</dbReference>
<dbReference type="InterPro" id="IPR018085">
    <property type="entry name" value="Ura-DNA_Glyclase_AS"/>
</dbReference>
<dbReference type="InterPro" id="IPR005122">
    <property type="entry name" value="Uracil-DNA_glycosylase-like"/>
</dbReference>
<dbReference type="InterPro" id="IPR036895">
    <property type="entry name" value="Uracil-DNA_glycosylase-like_sf"/>
</dbReference>
<dbReference type="NCBIfam" id="NF003588">
    <property type="entry name" value="PRK05254.1-1"/>
    <property type="match status" value="1"/>
</dbReference>
<dbReference type="NCBIfam" id="NF003589">
    <property type="entry name" value="PRK05254.1-2"/>
    <property type="match status" value="1"/>
</dbReference>
<dbReference type="NCBIfam" id="NF003591">
    <property type="entry name" value="PRK05254.1-4"/>
    <property type="match status" value="1"/>
</dbReference>
<dbReference type="NCBIfam" id="NF003592">
    <property type="entry name" value="PRK05254.1-5"/>
    <property type="match status" value="1"/>
</dbReference>
<dbReference type="NCBIfam" id="TIGR00628">
    <property type="entry name" value="ung"/>
    <property type="match status" value="1"/>
</dbReference>
<dbReference type="PANTHER" id="PTHR11264">
    <property type="entry name" value="URACIL-DNA GLYCOSYLASE"/>
    <property type="match status" value="1"/>
</dbReference>
<dbReference type="PANTHER" id="PTHR11264:SF0">
    <property type="entry name" value="URACIL-DNA GLYCOSYLASE"/>
    <property type="match status" value="1"/>
</dbReference>
<dbReference type="Pfam" id="PF03167">
    <property type="entry name" value="UDG"/>
    <property type="match status" value="1"/>
</dbReference>
<dbReference type="SMART" id="SM00986">
    <property type="entry name" value="UDG"/>
    <property type="match status" value="1"/>
</dbReference>
<dbReference type="SMART" id="SM00987">
    <property type="entry name" value="UreE_C"/>
    <property type="match status" value="1"/>
</dbReference>
<dbReference type="SUPFAM" id="SSF52141">
    <property type="entry name" value="Uracil-DNA glycosylase-like"/>
    <property type="match status" value="1"/>
</dbReference>
<dbReference type="PROSITE" id="PS00130">
    <property type="entry name" value="U_DNA_GLYCOSYLASE"/>
    <property type="match status" value="1"/>
</dbReference>